<organism>
    <name type="scientific">Shewanella frigidimarina (strain NCIMB 400)</name>
    <dbReference type="NCBI Taxonomy" id="318167"/>
    <lineage>
        <taxon>Bacteria</taxon>
        <taxon>Pseudomonadati</taxon>
        <taxon>Pseudomonadota</taxon>
        <taxon>Gammaproteobacteria</taxon>
        <taxon>Alteromonadales</taxon>
        <taxon>Shewanellaceae</taxon>
        <taxon>Shewanella</taxon>
    </lineage>
</organism>
<keyword id="KW-0963">Cytoplasm</keyword>
<keyword id="KW-0251">Elongation factor</keyword>
<keyword id="KW-0648">Protein biosynthesis</keyword>
<keyword id="KW-1185">Reference proteome</keyword>
<proteinExistence type="inferred from homology"/>
<name>EFTS_SHEFN</name>
<feature type="chain" id="PRO_1000006176" description="Elongation factor Ts">
    <location>
        <begin position="1"/>
        <end position="283"/>
    </location>
</feature>
<feature type="region of interest" description="Involved in Mg(2+) ion dislocation from EF-Tu" evidence="1">
    <location>
        <begin position="79"/>
        <end position="82"/>
    </location>
</feature>
<gene>
    <name evidence="1" type="primary">tsf</name>
    <name type="ordered locus">Sfri_1271</name>
</gene>
<accession>Q085E1</accession>
<sequence length="283" mass="30209">MAITAAQVKELRDRTGAGMMDCKNALTETDGDIELAIDNMRKSGAAKAAKKAGNIAADGTILIKNGEGFAALLEVNCQTDFVAKDSNFLAFANAVLDVAAASKVSIEDLKAQFEETRVALVTKIGENINVRRVEYIDGANLASYRHGDRIGVVVAGEADEETLKHIAMHVAASKPDFVNPEDVPAELVEREQALQIEIAMNEGKPAEIAEKMVVGRMKKFTGEISLTGQAFIMEPKKTVGEVLKSKGATVTSFIRLEVGEGIEKKAEDFAAEVAAQIAATKKA</sequence>
<evidence type="ECO:0000255" key="1">
    <source>
        <dbReference type="HAMAP-Rule" id="MF_00050"/>
    </source>
</evidence>
<protein>
    <recommendedName>
        <fullName evidence="1">Elongation factor Ts</fullName>
        <shortName evidence="1">EF-Ts</shortName>
    </recommendedName>
</protein>
<dbReference type="EMBL" id="CP000447">
    <property type="protein sequence ID" value="ABI71124.1"/>
    <property type="molecule type" value="Genomic_DNA"/>
</dbReference>
<dbReference type="RefSeq" id="WP_011636745.1">
    <property type="nucleotide sequence ID" value="NC_008345.1"/>
</dbReference>
<dbReference type="SMR" id="Q085E1"/>
<dbReference type="STRING" id="318167.Sfri_1271"/>
<dbReference type="KEGG" id="sfr:Sfri_1271"/>
<dbReference type="eggNOG" id="COG0264">
    <property type="taxonomic scope" value="Bacteria"/>
</dbReference>
<dbReference type="HOGENOM" id="CLU_047155_0_2_6"/>
<dbReference type="OrthoDB" id="9808348at2"/>
<dbReference type="Proteomes" id="UP000000684">
    <property type="component" value="Chromosome"/>
</dbReference>
<dbReference type="GO" id="GO:0005737">
    <property type="term" value="C:cytoplasm"/>
    <property type="evidence" value="ECO:0007669"/>
    <property type="project" value="UniProtKB-SubCell"/>
</dbReference>
<dbReference type="GO" id="GO:0003746">
    <property type="term" value="F:translation elongation factor activity"/>
    <property type="evidence" value="ECO:0007669"/>
    <property type="project" value="UniProtKB-UniRule"/>
</dbReference>
<dbReference type="CDD" id="cd14275">
    <property type="entry name" value="UBA_EF-Ts"/>
    <property type="match status" value="1"/>
</dbReference>
<dbReference type="FunFam" id="1.10.286.20:FF:000001">
    <property type="entry name" value="Elongation factor Ts"/>
    <property type="match status" value="1"/>
</dbReference>
<dbReference type="FunFam" id="1.10.8.10:FF:000001">
    <property type="entry name" value="Elongation factor Ts"/>
    <property type="match status" value="1"/>
</dbReference>
<dbReference type="FunFam" id="3.30.479.20:FF:000001">
    <property type="entry name" value="Elongation factor Ts"/>
    <property type="match status" value="1"/>
</dbReference>
<dbReference type="Gene3D" id="1.10.286.20">
    <property type="match status" value="1"/>
</dbReference>
<dbReference type="Gene3D" id="1.10.8.10">
    <property type="entry name" value="DNA helicase RuvA subunit, C-terminal domain"/>
    <property type="match status" value="1"/>
</dbReference>
<dbReference type="Gene3D" id="3.30.479.20">
    <property type="entry name" value="Elongation factor Ts, dimerisation domain"/>
    <property type="match status" value="2"/>
</dbReference>
<dbReference type="HAMAP" id="MF_00050">
    <property type="entry name" value="EF_Ts"/>
    <property type="match status" value="1"/>
</dbReference>
<dbReference type="InterPro" id="IPR036402">
    <property type="entry name" value="EF-Ts_dimer_sf"/>
</dbReference>
<dbReference type="InterPro" id="IPR001816">
    <property type="entry name" value="Transl_elong_EFTs/EF1B"/>
</dbReference>
<dbReference type="InterPro" id="IPR014039">
    <property type="entry name" value="Transl_elong_EFTs/EF1B_dimer"/>
</dbReference>
<dbReference type="InterPro" id="IPR018101">
    <property type="entry name" value="Transl_elong_Ts_CS"/>
</dbReference>
<dbReference type="InterPro" id="IPR009060">
    <property type="entry name" value="UBA-like_sf"/>
</dbReference>
<dbReference type="NCBIfam" id="TIGR00116">
    <property type="entry name" value="tsf"/>
    <property type="match status" value="1"/>
</dbReference>
<dbReference type="PANTHER" id="PTHR11741">
    <property type="entry name" value="ELONGATION FACTOR TS"/>
    <property type="match status" value="1"/>
</dbReference>
<dbReference type="PANTHER" id="PTHR11741:SF0">
    <property type="entry name" value="ELONGATION FACTOR TS, MITOCHONDRIAL"/>
    <property type="match status" value="1"/>
</dbReference>
<dbReference type="Pfam" id="PF00889">
    <property type="entry name" value="EF_TS"/>
    <property type="match status" value="1"/>
</dbReference>
<dbReference type="SUPFAM" id="SSF54713">
    <property type="entry name" value="Elongation factor Ts (EF-Ts), dimerisation domain"/>
    <property type="match status" value="2"/>
</dbReference>
<dbReference type="SUPFAM" id="SSF46934">
    <property type="entry name" value="UBA-like"/>
    <property type="match status" value="1"/>
</dbReference>
<dbReference type="PROSITE" id="PS01126">
    <property type="entry name" value="EF_TS_1"/>
    <property type="match status" value="1"/>
</dbReference>
<dbReference type="PROSITE" id="PS01127">
    <property type="entry name" value="EF_TS_2"/>
    <property type="match status" value="1"/>
</dbReference>
<comment type="function">
    <text evidence="1">Associates with the EF-Tu.GDP complex and induces the exchange of GDP to GTP. It remains bound to the aminoacyl-tRNA.EF-Tu.GTP complex up to the GTP hydrolysis stage on the ribosome.</text>
</comment>
<comment type="subcellular location">
    <subcellularLocation>
        <location evidence="1">Cytoplasm</location>
    </subcellularLocation>
</comment>
<comment type="similarity">
    <text evidence="1">Belongs to the EF-Ts family.</text>
</comment>
<reference key="1">
    <citation type="submission" date="2006-08" db="EMBL/GenBank/DDBJ databases">
        <title>Complete sequence of Shewanella frigidimarina NCIMB 400.</title>
        <authorList>
            <consortium name="US DOE Joint Genome Institute"/>
            <person name="Copeland A."/>
            <person name="Lucas S."/>
            <person name="Lapidus A."/>
            <person name="Barry K."/>
            <person name="Detter J.C."/>
            <person name="Glavina del Rio T."/>
            <person name="Hammon N."/>
            <person name="Israni S."/>
            <person name="Dalin E."/>
            <person name="Tice H."/>
            <person name="Pitluck S."/>
            <person name="Fredrickson J.K."/>
            <person name="Kolker E."/>
            <person name="McCuel L.A."/>
            <person name="DiChristina T."/>
            <person name="Nealson K.H."/>
            <person name="Newman D."/>
            <person name="Tiedje J.M."/>
            <person name="Zhou J."/>
            <person name="Romine M.F."/>
            <person name="Culley D.E."/>
            <person name="Serres M."/>
            <person name="Chertkov O."/>
            <person name="Brettin T."/>
            <person name="Bruce D."/>
            <person name="Han C."/>
            <person name="Tapia R."/>
            <person name="Gilna P."/>
            <person name="Schmutz J."/>
            <person name="Larimer F."/>
            <person name="Land M."/>
            <person name="Hauser L."/>
            <person name="Kyrpides N."/>
            <person name="Mikhailova N."/>
            <person name="Richardson P."/>
        </authorList>
    </citation>
    <scope>NUCLEOTIDE SEQUENCE [LARGE SCALE GENOMIC DNA]</scope>
    <source>
        <strain>NCIMB 400</strain>
    </source>
</reference>